<sequence length="801" mass="90071">MIFSKHLLSHFVDISHLDIEQMCMRLSSMGLEVESAYPLKMPQKVVVGKILSLTPHPDADKLNVCKVSIGSQELQIVCGANNVKANQYVAVALEGAVIPHTKSGEIVIKQTNLRGIESCGMLCSSVELGLPKINDGIMVLDSTAGHLELGVELGNLPLFNDYVIEVGITPNRGDCLSVLGIARELATSYDLRLKHEVDMDNVVTLGLGRVLQILCDEKIEAHLLYRVVEVKQAYLPLDIALCLARNGSLVDDIMCNFLEYGTYMTGVILNAYKLYDCENKDIVLDNGLVAQLRIKKDENGLGAVFAHQKLSIIGVSYGERHFGTRSEIYIIEASYVNPTLIAKSLYKHAIKGDVQLTYRSTRGSNPNLEQGIDFLCRKMVLVSDALVYSGSHNIVQNIDEITIKTTFKAINQIIGIELDKEEIATILKRLNFKLDATCDENFFMVTVPNYRHDIQSIQDVAEEVLRIYGIDNVSSVPLLCSQSHNINNTYFTYKNTRKLAYGLIAYGFVECIHYVFASSQNLERLGFVRLDEDLELLNPITNELDTLRTSLLPAMLDSVKRNENLGFKNITLFEIGSVYSSKREEKSKLALVASGCMQDECYPHTKAVKWNLFAFGTICQRCVGDLSFRNIRDEANAKELLSHFCFTDERLLHPYQSAFVYQKDKPIGIIAKLHPQVATNMDLSEEIFICEIEIGMSDFSLPQAYEFSKYQKSTRDLTILIDKDIPFYRVRQILLEDQIAYVKNIYPIDVYYDKALGEKMALSIRIVLQSDEGTLQEMQLVQAVESVLSVLVREFDAVLRT</sequence>
<keyword id="KW-0030">Aminoacyl-tRNA synthetase</keyword>
<keyword id="KW-0067">ATP-binding</keyword>
<keyword id="KW-0963">Cytoplasm</keyword>
<keyword id="KW-0436">Ligase</keyword>
<keyword id="KW-0460">Magnesium</keyword>
<keyword id="KW-0479">Metal-binding</keyword>
<keyword id="KW-0547">Nucleotide-binding</keyword>
<keyword id="KW-0648">Protein biosynthesis</keyword>
<keyword id="KW-1185">Reference proteome</keyword>
<keyword id="KW-0694">RNA-binding</keyword>
<keyword id="KW-0820">tRNA-binding</keyword>
<gene>
    <name evidence="1" type="primary">pheT</name>
    <name type="ordered locus">HH_0027</name>
</gene>
<proteinExistence type="inferred from homology"/>
<evidence type="ECO:0000255" key="1">
    <source>
        <dbReference type="HAMAP-Rule" id="MF_00283"/>
    </source>
</evidence>
<protein>
    <recommendedName>
        <fullName evidence="1">Phenylalanine--tRNA ligase beta subunit</fullName>
        <ecNumber evidence="1">6.1.1.20</ecNumber>
    </recommendedName>
    <alternativeName>
        <fullName evidence="1">Phenylalanyl-tRNA synthetase beta subunit</fullName>
        <shortName evidence="1">PheRS</shortName>
    </alternativeName>
</protein>
<reference key="1">
    <citation type="journal article" date="2003" name="Proc. Natl. Acad. Sci. U.S.A.">
        <title>The complete genome sequence of the carcinogenic bacterium Helicobacter hepaticus.</title>
        <authorList>
            <person name="Suerbaum S."/>
            <person name="Josenhans C."/>
            <person name="Sterzenbach T."/>
            <person name="Drescher B."/>
            <person name="Brandt P."/>
            <person name="Bell M."/>
            <person name="Droege M."/>
            <person name="Fartmann B."/>
            <person name="Fischer H.-P."/>
            <person name="Ge Z."/>
            <person name="Hoerster A."/>
            <person name="Holland R."/>
            <person name="Klein K."/>
            <person name="Koenig J."/>
            <person name="Macko L."/>
            <person name="Mendz G.L."/>
            <person name="Nyakatura G."/>
            <person name="Schauer D.B."/>
            <person name="Shen Z."/>
            <person name="Weber J."/>
            <person name="Frosch M."/>
            <person name="Fox J.G."/>
        </authorList>
    </citation>
    <scope>NUCLEOTIDE SEQUENCE [LARGE SCALE GENOMIC DNA]</scope>
    <source>
        <strain>ATCC 51449 / 3B1</strain>
    </source>
</reference>
<comment type="catalytic activity">
    <reaction evidence="1">
        <text>tRNA(Phe) + L-phenylalanine + ATP = L-phenylalanyl-tRNA(Phe) + AMP + diphosphate + H(+)</text>
        <dbReference type="Rhea" id="RHEA:19413"/>
        <dbReference type="Rhea" id="RHEA-COMP:9668"/>
        <dbReference type="Rhea" id="RHEA-COMP:9699"/>
        <dbReference type="ChEBI" id="CHEBI:15378"/>
        <dbReference type="ChEBI" id="CHEBI:30616"/>
        <dbReference type="ChEBI" id="CHEBI:33019"/>
        <dbReference type="ChEBI" id="CHEBI:58095"/>
        <dbReference type="ChEBI" id="CHEBI:78442"/>
        <dbReference type="ChEBI" id="CHEBI:78531"/>
        <dbReference type="ChEBI" id="CHEBI:456215"/>
        <dbReference type="EC" id="6.1.1.20"/>
    </reaction>
</comment>
<comment type="cofactor">
    <cofactor evidence="1">
        <name>Mg(2+)</name>
        <dbReference type="ChEBI" id="CHEBI:18420"/>
    </cofactor>
    <text evidence="1">Binds 2 magnesium ions per tetramer.</text>
</comment>
<comment type="subunit">
    <text evidence="1">Tetramer of two alpha and two beta subunits.</text>
</comment>
<comment type="subcellular location">
    <subcellularLocation>
        <location evidence="1">Cytoplasm</location>
    </subcellularLocation>
</comment>
<comment type="similarity">
    <text evidence="1">Belongs to the phenylalanyl-tRNA synthetase beta subunit family. Type 1 subfamily.</text>
</comment>
<organism>
    <name type="scientific">Helicobacter hepaticus (strain ATCC 51449 / 3B1)</name>
    <dbReference type="NCBI Taxonomy" id="235279"/>
    <lineage>
        <taxon>Bacteria</taxon>
        <taxon>Pseudomonadati</taxon>
        <taxon>Campylobacterota</taxon>
        <taxon>Epsilonproteobacteria</taxon>
        <taxon>Campylobacterales</taxon>
        <taxon>Helicobacteraceae</taxon>
        <taxon>Helicobacter</taxon>
    </lineage>
</organism>
<feature type="chain" id="PRO_0000232802" description="Phenylalanine--tRNA ligase beta subunit">
    <location>
        <begin position="1"/>
        <end position="801"/>
    </location>
</feature>
<feature type="domain" description="tRNA-binding" evidence="1">
    <location>
        <begin position="39"/>
        <end position="154"/>
    </location>
</feature>
<feature type="domain" description="B5" evidence="1">
    <location>
        <begin position="398"/>
        <end position="475"/>
    </location>
</feature>
<feature type="domain" description="FDX-ACB" evidence="1">
    <location>
        <begin position="708"/>
        <end position="800"/>
    </location>
</feature>
<feature type="binding site" evidence="1">
    <location>
        <position position="453"/>
    </location>
    <ligand>
        <name>Mg(2+)</name>
        <dbReference type="ChEBI" id="CHEBI:18420"/>
        <note>shared with alpha subunit</note>
    </ligand>
</feature>
<feature type="binding site" evidence="1">
    <location>
        <position position="459"/>
    </location>
    <ligand>
        <name>Mg(2+)</name>
        <dbReference type="ChEBI" id="CHEBI:18420"/>
        <note>shared with alpha subunit</note>
    </ligand>
</feature>
<feature type="binding site" evidence="1">
    <location>
        <position position="462"/>
    </location>
    <ligand>
        <name>Mg(2+)</name>
        <dbReference type="ChEBI" id="CHEBI:18420"/>
        <note>shared with alpha subunit</note>
    </ligand>
</feature>
<feature type="binding site" evidence="1">
    <location>
        <position position="463"/>
    </location>
    <ligand>
        <name>Mg(2+)</name>
        <dbReference type="ChEBI" id="CHEBI:18420"/>
        <note>shared with alpha subunit</note>
    </ligand>
</feature>
<name>SYFB_HELHP</name>
<dbReference type="EC" id="6.1.1.20" evidence="1"/>
<dbReference type="EMBL" id="AE017125">
    <property type="protein sequence ID" value="AAP76624.1"/>
    <property type="molecule type" value="Genomic_DNA"/>
</dbReference>
<dbReference type="RefSeq" id="WP_011114870.1">
    <property type="nucleotide sequence ID" value="NC_004917.1"/>
</dbReference>
<dbReference type="SMR" id="Q7VK65"/>
<dbReference type="STRING" id="235279.HH_0027"/>
<dbReference type="KEGG" id="hhe:HH_0027"/>
<dbReference type="eggNOG" id="COG0072">
    <property type="taxonomic scope" value="Bacteria"/>
</dbReference>
<dbReference type="eggNOG" id="COG0073">
    <property type="taxonomic scope" value="Bacteria"/>
</dbReference>
<dbReference type="HOGENOM" id="CLU_016891_2_1_7"/>
<dbReference type="OrthoDB" id="9805455at2"/>
<dbReference type="Proteomes" id="UP000002495">
    <property type="component" value="Chromosome"/>
</dbReference>
<dbReference type="GO" id="GO:0009328">
    <property type="term" value="C:phenylalanine-tRNA ligase complex"/>
    <property type="evidence" value="ECO:0007669"/>
    <property type="project" value="TreeGrafter"/>
</dbReference>
<dbReference type="GO" id="GO:0005524">
    <property type="term" value="F:ATP binding"/>
    <property type="evidence" value="ECO:0007669"/>
    <property type="project" value="UniProtKB-UniRule"/>
</dbReference>
<dbReference type="GO" id="GO:0000287">
    <property type="term" value="F:magnesium ion binding"/>
    <property type="evidence" value="ECO:0007669"/>
    <property type="project" value="UniProtKB-UniRule"/>
</dbReference>
<dbReference type="GO" id="GO:0004826">
    <property type="term" value="F:phenylalanine-tRNA ligase activity"/>
    <property type="evidence" value="ECO:0007669"/>
    <property type="project" value="UniProtKB-UniRule"/>
</dbReference>
<dbReference type="GO" id="GO:0000049">
    <property type="term" value="F:tRNA binding"/>
    <property type="evidence" value="ECO:0007669"/>
    <property type="project" value="UniProtKB-KW"/>
</dbReference>
<dbReference type="GO" id="GO:0006432">
    <property type="term" value="P:phenylalanyl-tRNA aminoacylation"/>
    <property type="evidence" value="ECO:0007669"/>
    <property type="project" value="UniProtKB-UniRule"/>
</dbReference>
<dbReference type="CDD" id="cd00769">
    <property type="entry name" value="PheRS_beta_core"/>
    <property type="match status" value="1"/>
</dbReference>
<dbReference type="CDD" id="cd02796">
    <property type="entry name" value="tRNA_bind_bactPheRS"/>
    <property type="match status" value="1"/>
</dbReference>
<dbReference type="Gene3D" id="3.30.56.10">
    <property type="match status" value="2"/>
</dbReference>
<dbReference type="Gene3D" id="3.30.930.10">
    <property type="entry name" value="Bira Bifunctional Protein, Domain 2"/>
    <property type="match status" value="1"/>
</dbReference>
<dbReference type="Gene3D" id="3.30.70.380">
    <property type="entry name" value="Ferrodoxin-fold anticodon-binding domain"/>
    <property type="match status" value="1"/>
</dbReference>
<dbReference type="Gene3D" id="2.40.50.140">
    <property type="entry name" value="Nucleic acid-binding proteins"/>
    <property type="match status" value="1"/>
</dbReference>
<dbReference type="HAMAP" id="MF_00283">
    <property type="entry name" value="Phe_tRNA_synth_beta1"/>
    <property type="match status" value="1"/>
</dbReference>
<dbReference type="InterPro" id="IPR045864">
    <property type="entry name" value="aa-tRNA-synth_II/BPL/LPL"/>
</dbReference>
<dbReference type="InterPro" id="IPR009061">
    <property type="entry name" value="DNA-bd_dom_put_sf"/>
</dbReference>
<dbReference type="InterPro" id="IPR005121">
    <property type="entry name" value="Fdx_antiC-bd"/>
</dbReference>
<dbReference type="InterPro" id="IPR036690">
    <property type="entry name" value="Fdx_antiC-bd_sf"/>
</dbReference>
<dbReference type="InterPro" id="IPR012340">
    <property type="entry name" value="NA-bd_OB-fold"/>
</dbReference>
<dbReference type="InterPro" id="IPR045060">
    <property type="entry name" value="Phe-tRNA-ligase_IIc_bsu"/>
</dbReference>
<dbReference type="InterPro" id="IPR004532">
    <property type="entry name" value="Phe-tRNA-ligase_IIc_bsu_bact"/>
</dbReference>
<dbReference type="InterPro" id="IPR041616">
    <property type="entry name" value="PheRS_beta_core"/>
</dbReference>
<dbReference type="InterPro" id="IPR002547">
    <property type="entry name" value="tRNA-bd_dom"/>
</dbReference>
<dbReference type="InterPro" id="IPR033714">
    <property type="entry name" value="tRNA_bind_bactPheRS"/>
</dbReference>
<dbReference type="InterPro" id="IPR005147">
    <property type="entry name" value="tRNA_synthase_B5-dom"/>
</dbReference>
<dbReference type="NCBIfam" id="TIGR00472">
    <property type="entry name" value="pheT_bact"/>
    <property type="match status" value="1"/>
</dbReference>
<dbReference type="NCBIfam" id="NF045760">
    <property type="entry name" value="YtpR"/>
    <property type="match status" value="1"/>
</dbReference>
<dbReference type="PANTHER" id="PTHR10947:SF0">
    <property type="entry name" value="PHENYLALANINE--TRNA LIGASE BETA SUBUNIT"/>
    <property type="match status" value="1"/>
</dbReference>
<dbReference type="PANTHER" id="PTHR10947">
    <property type="entry name" value="PHENYLALANYL-TRNA SYNTHETASE BETA CHAIN AND LEUCINE-RICH REPEAT-CONTAINING PROTEIN 47"/>
    <property type="match status" value="1"/>
</dbReference>
<dbReference type="Pfam" id="PF03484">
    <property type="entry name" value="B5"/>
    <property type="match status" value="1"/>
</dbReference>
<dbReference type="Pfam" id="PF03147">
    <property type="entry name" value="FDX-ACB"/>
    <property type="match status" value="1"/>
</dbReference>
<dbReference type="Pfam" id="PF01588">
    <property type="entry name" value="tRNA_bind"/>
    <property type="match status" value="1"/>
</dbReference>
<dbReference type="Pfam" id="PF17759">
    <property type="entry name" value="tRNA_synthFbeta"/>
    <property type="match status" value="1"/>
</dbReference>
<dbReference type="SMART" id="SM00874">
    <property type="entry name" value="B5"/>
    <property type="match status" value="1"/>
</dbReference>
<dbReference type="SMART" id="SM00896">
    <property type="entry name" value="FDX-ACB"/>
    <property type="match status" value="1"/>
</dbReference>
<dbReference type="SUPFAM" id="SSF54991">
    <property type="entry name" value="Anticodon-binding domain of PheRS"/>
    <property type="match status" value="1"/>
</dbReference>
<dbReference type="SUPFAM" id="SSF55681">
    <property type="entry name" value="Class II aaRS and biotin synthetases"/>
    <property type="match status" value="1"/>
</dbReference>
<dbReference type="SUPFAM" id="SSF50249">
    <property type="entry name" value="Nucleic acid-binding proteins"/>
    <property type="match status" value="1"/>
</dbReference>
<dbReference type="SUPFAM" id="SSF46955">
    <property type="entry name" value="Putative DNA-binding domain"/>
    <property type="match status" value="1"/>
</dbReference>
<dbReference type="PROSITE" id="PS51483">
    <property type="entry name" value="B5"/>
    <property type="match status" value="1"/>
</dbReference>
<dbReference type="PROSITE" id="PS51447">
    <property type="entry name" value="FDX_ACB"/>
    <property type="match status" value="1"/>
</dbReference>
<dbReference type="PROSITE" id="PS50886">
    <property type="entry name" value="TRBD"/>
    <property type="match status" value="1"/>
</dbReference>
<accession>Q7VK65</accession>